<organism>
    <name type="scientific">Xanthomonas oryzae pv. oryzae (strain MAFF 311018)</name>
    <dbReference type="NCBI Taxonomy" id="342109"/>
    <lineage>
        <taxon>Bacteria</taxon>
        <taxon>Pseudomonadati</taxon>
        <taxon>Pseudomonadota</taxon>
        <taxon>Gammaproteobacteria</taxon>
        <taxon>Lysobacterales</taxon>
        <taxon>Lysobacteraceae</taxon>
        <taxon>Xanthomonas</taxon>
    </lineage>
</organism>
<reference key="1">
    <citation type="journal article" date="2005" name="Jpn. Agric. Res. Q.">
        <title>Genome sequence of Xanthomonas oryzae pv. oryzae suggests contribution of large numbers of effector genes and insertion sequences to its race diversity.</title>
        <authorList>
            <person name="Ochiai H."/>
            <person name="Inoue Y."/>
            <person name="Takeya M."/>
            <person name="Sasaki A."/>
            <person name="Kaku H."/>
        </authorList>
    </citation>
    <scope>NUCLEOTIDE SEQUENCE [LARGE SCALE GENOMIC DNA]</scope>
    <source>
        <strain>MAFF 311018</strain>
    </source>
</reference>
<name>RS20_XANOM</name>
<comment type="function">
    <text evidence="1">Binds directly to 16S ribosomal RNA.</text>
</comment>
<comment type="similarity">
    <text evidence="1">Belongs to the bacterial ribosomal protein bS20 family.</text>
</comment>
<accession>Q2P5B3</accession>
<keyword id="KW-0687">Ribonucleoprotein</keyword>
<keyword id="KW-0689">Ribosomal protein</keyword>
<keyword id="KW-0694">RNA-binding</keyword>
<keyword id="KW-0699">rRNA-binding</keyword>
<dbReference type="EMBL" id="AP008229">
    <property type="protein sequence ID" value="BAE68264.1"/>
    <property type="molecule type" value="Genomic_DNA"/>
</dbReference>
<dbReference type="RefSeq" id="WP_003484323.1">
    <property type="nucleotide sequence ID" value="NC_007705.1"/>
</dbReference>
<dbReference type="SMR" id="Q2P5B3"/>
<dbReference type="GeneID" id="97509601"/>
<dbReference type="KEGG" id="xom:XOO1509"/>
<dbReference type="HOGENOM" id="CLU_160655_4_0_6"/>
<dbReference type="GO" id="GO:0005829">
    <property type="term" value="C:cytosol"/>
    <property type="evidence" value="ECO:0007669"/>
    <property type="project" value="TreeGrafter"/>
</dbReference>
<dbReference type="GO" id="GO:0015935">
    <property type="term" value="C:small ribosomal subunit"/>
    <property type="evidence" value="ECO:0007669"/>
    <property type="project" value="TreeGrafter"/>
</dbReference>
<dbReference type="GO" id="GO:0070181">
    <property type="term" value="F:small ribosomal subunit rRNA binding"/>
    <property type="evidence" value="ECO:0007669"/>
    <property type="project" value="TreeGrafter"/>
</dbReference>
<dbReference type="GO" id="GO:0003735">
    <property type="term" value="F:structural constituent of ribosome"/>
    <property type="evidence" value="ECO:0007669"/>
    <property type="project" value="InterPro"/>
</dbReference>
<dbReference type="GO" id="GO:0006412">
    <property type="term" value="P:translation"/>
    <property type="evidence" value="ECO:0007669"/>
    <property type="project" value="UniProtKB-UniRule"/>
</dbReference>
<dbReference type="FunFam" id="1.20.58.110:FF:000001">
    <property type="entry name" value="30S ribosomal protein S20"/>
    <property type="match status" value="1"/>
</dbReference>
<dbReference type="Gene3D" id="1.20.58.110">
    <property type="entry name" value="Ribosomal protein S20"/>
    <property type="match status" value="1"/>
</dbReference>
<dbReference type="HAMAP" id="MF_00500">
    <property type="entry name" value="Ribosomal_bS20"/>
    <property type="match status" value="1"/>
</dbReference>
<dbReference type="InterPro" id="IPR002583">
    <property type="entry name" value="Ribosomal_bS20"/>
</dbReference>
<dbReference type="InterPro" id="IPR036510">
    <property type="entry name" value="Ribosomal_bS20_sf"/>
</dbReference>
<dbReference type="NCBIfam" id="TIGR00029">
    <property type="entry name" value="S20"/>
    <property type="match status" value="1"/>
</dbReference>
<dbReference type="PANTHER" id="PTHR33398">
    <property type="entry name" value="30S RIBOSOMAL PROTEIN S20"/>
    <property type="match status" value="1"/>
</dbReference>
<dbReference type="PANTHER" id="PTHR33398:SF1">
    <property type="entry name" value="SMALL RIBOSOMAL SUBUNIT PROTEIN BS20C"/>
    <property type="match status" value="1"/>
</dbReference>
<dbReference type="Pfam" id="PF01649">
    <property type="entry name" value="Ribosomal_S20p"/>
    <property type="match status" value="1"/>
</dbReference>
<dbReference type="SUPFAM" id="SSF46992">
    <property type="entry name" value="Ribosomal protein S20"/>
    <property type="match status" value="1"/>
</dbReference>
<evidence type="ECO:0000255" key="1">
    <source>
        <dbReference type="HAMAP-Rule" id="MF_00500"/>
    </source>
</evidence>
<evidence type="ECO:0000256" key="2">
    <source>
        <dbReference type="SAM" id="MobiDB-lite"/>
    </source>
</evidence>
<evidence type="ECO:0000305" key="3"/>
<sequence>MANIKSAKKRAKQTIVRNERNTGQRSMLRTAVKKVIKALDANDAAGAEAAFAVAQPILDRFSARGLIHKNKAARHKSRLTARIKAIKAA</sequence>
<gene>
    <name evidence="1" type="primary">rpsT</name>
    <name type="ordered locus">XOO1509</name>
</gene>
<feature type="chain" id="PRO_0000236465" description="Small ribosomal subunit protein bS20">
    <location>
        <begin position="1"/>
        <end position="89"/>
    </location>
</feature>
<feature type="region of interest" description="Disordered" evidence="2">
    <location>
        <begin position="1"/>
        <end position="22"/>
    </location>
</feature>
<feature type="compositionally biased region" description="Basic residues" evidence="2">
    <location>
        <begin position="1"/>
        <end position="12"/>
    </location>
</feature>
<proteinExistence type="inferred from homology"/>
<protein>
    <recommendedName>
        <fullName evidence="1">Small ribosomal subunit protein bS20</fullName>
    </recommendedName>
    <alternativeName>
        <fullName evidence="3">30S ribosomal protein S20</fullName>
    </alternativeName>
</protein>